<reference key="1">
    <citation type="journal article" date="2008" name="J. Bacteriol.">
        <title>The pangenome structure of Escherichia coli: comparative genomic analysis of E. coli commensal and pathogenic isolates.</title>
        <authorList>
            <person name="Rasko D.A."/>
            <person name="Rosovitz M.J."/>
            <person name="Myers G.S.A."/>
            <person name="Mongodin E.F."/>
            <person name="Fricke W.F."/>
            <person name="Gajer P."/>
            <person name="Crabtree J."/>
            <person name="Sebaihia M."/>
            <person name="Thomson N.R."/>
            <person name="Chaudhuri R."/>
            <person name="Henderson I.R."/>
            <person name="Sperandio V."/>
            <person name="Ravel J."/>
        </authorList>
    </citation>
    <scope>NUCLEOTIDE SEQUENCE [LARGE SCALE GENOMIC DNA]</scope>
    <source>
        <strain>E24377A / ETEC</strain>
    </source>
</reference>
<sequence length="213" mass="23783">MRSKYIVIEGLEGAGKTTARNVVVETLEQLGIRDMVFTREPGGTQLAEKLRSLVLDIKSVGDEVITDKAEVLMFYAARVQLVETVIKPALANGTWVIGDRHDLSTQAYQGGGRGIDQHMLATLRDAVLGDFRPDLTLYLDVTPEVGLKRARARGELDRIEQESFDFFNRTRARYLELAAQDKSIHTIDATQPLEAVMDAIRTTVTHWVKELDA</sequence>
<gene>
    <name evidence="1" type="primary">tmk</name>
    <name type="ordered locus">EcE24377A_1219</name>
</gene>
<accession>A7ZKK1</accession>
<name>KTHY_ECO24</name>
<protein>
    <recommendedName>
        <fullName evidence="1">Thymidylate kinase</fullName>
        <ecNumber evidence="1">2.7.4.9</ecNumber>
    </recommendedName>
    <alternativeName>
        <fullName evidence="1">dTMP kinase</fullName>
    </alternativeName>
</protein>
<comment type="function">
    <text evidence="1">Phosphorylation of dTMP to form dTDP in both de novo and salvage pathways of dTTP synthesis.</text>
</comment>
<comment type="catalytic activity">
    <reaction evidence="1">
        <text>dTMP + ATP = dTDP + ADP</text>
        <dbReference type="Rhea" id="RHEA:13517"/>
        <dbReference type="ChEBI" id="CHEBI:30616"/>
        <dbReference type="ChEBI" id="CHEBI:58369"/>
        <dbReference type="ChEBI" id="CHEBI:63528"/>
        <dbReference type="ChEBI" id="CHEBI:456216"/>
        <dbReference type="EC" id="2.7.4.9"/>
    </reaction>
</comment>
<comment type="similarity">
    <text evidence="1">Belongs to the thymidylate kinase family.</text>
</comment>
<proteinExistence type="inferred from homology"/>
<evidence type="ECO:0000255" key="1">
    <source>
        <dbReference type="HAMAP-Rule" id="MF_00165"/>
    </source>
</evidence>
<feature type="chain" id="PRO_1000058249" description="Thymidylate kinase">
    <location>
        <begin position="1"/>
        <end position="213"/>
    </location>
</feature>
<feature type="binding site" evidence="1">
    <location>
        <begin position="10"/>
        <end position="17"/>
    </location>
    <ligand>
        <name>ATP</name>
        <dbReference type="ChEBI" id="CHEBI:30616"/>
    </ligand>
</feature>
<organism>
    <name type="scientific">Escherichia coli O139:H28 (strain E24377A / ETEC)</name>
    <dbReference type="NCBI Taxonomy" id="331111"/>
    <lineage>
        <taxon>Bacteria</taxon>
        <taxon>Pseudomonadati</taxon>
        <taxon>Pseudomonadota</taxon>
        <taxon>Gammaproteobacteria</taxon>
        <taxon>Enterobacterales</taxon>
        <taxon>Enterobacteriaceae</taxon>
        <taxon>Escherichia</taxon>
    </lineage>
</organism>
<dbReference type="EC" id="2.7.4.9" evidence="1"/>
<dbReference type="EMBL" id="CP000800">
    <property type="protein sequence ID" value="ABV18961.1"/>
    <property type="molecule type" value="Genomic_DNA"/>
</dbReference>
<dbReference type="RefSeq" id="WP_001257000.1">
    <property type="nucleotide sequence ID" value="NC_009801.1"/>
</dbReference>
<dbReference type="SMR" id="A7ZKK1"/>
<dbReference type="GeneID" id="93776310"/>
<dbReference type="KEGG" id="ecw:EcE24377A_1219"/>
<dbReference type="HOGENOM" id="CLU_049131_0_1_6"/>
<dbReference type="Proteomes" id="UP000001122">
    <property type="component" value="Chromosome"/>
</dbReference>
<dbReference type="GO" id="GO:0005829">
    <property type="term" value="C:cytosol"/>
    <property type="evidence" value="ECO:0007669"/>
    <property type="project" value="TreeGrafter"/>
</dbReference>
<dbReference type="GO" id="GO:0005524">
    <property type="term" value="F:ATP binding"/>
    <property type="evidence" value="ECO:0007669"/>
    <property type="project" value="UniProtKB-UniRule"/>
</dbReference>
<dbReference type="GO" id="GO:0004798">
    <property type="term" value="F:dTMP kinase activity"/>
    <property type="evidence" value="ECO:0007669"/>
    <property type="project" value="UniProtKB-UniRule"/>
</dbReference>
<dbReference type="GO" id="GO:0006233">
    <property type="term" value="P:dTDP biosynthetic process"/>
    <property type="evidence" value="ECO:0007669"/>
    <property type="project" value="InterPro"/>
</dbReference>
<dbReference type="GO" id="GO:0006235">
    <property type="term" value="P:dTTP biosynthetic process"/>
    <property type="evidence" value="ECO:0007669"/>
    <property type="project" value="UniProtKB-UniRule"/>
</dbReference>
<dbReference type="GO" id="GO:0006227">
    <property type="term" value="P:dUDP biosynthetic process"/>
    <property type="evidence" value="ECO:0007669"/>
    <property type="project" value="TreeGrafter"/>
</dbReference>
<dbReference type="CDD" id="cd01672">
    <property type="entry name" value="TMPK"/>
    <property type="match status" value="1"/>
</dbReference>
<dbReference type="FunFam" id="3.40.50.300:FF:000321">
    <property type="entry name" value="Thymidylate kinase"/>
    <property type="match status" value="1"/>
</dbReference>
<dbReference type="Gene3D" id="3.40.50.300">
    <property type="entry name" value="P-loop containing nucleotide triphosphate hydrolases"/>
    <property type="match status" value="1"/>
</dbReference>
<dbReference type="HAMAP" id="MF_00165">
    <property type="entry name" value="Thymidylate_kinase"/>
    <property type="match status" value="1"/>
</dbReference>
<dbReference type="InterPro" id="IPR027417">
    <property type="entry name" value="P-loop_NTPase"/>
</dbReference>
<dbReference type="InterPro" id="IPR039430">
    <property type="entry name" value="Thymidylate_kin-like_dom"/>
</dbReference>
<dbReference type="InterPro" id="IPR018095">
    <property type="entry name" value="Thymidylate_kin_CS"/>
</dbReference>
<dbReference type="InterPro" id="IPR018094">
    <property type="entry name" value="Thymidylate_kinase"/>
</dbReference>
<dbReference type="NCBIfam" id="TIGR00041">
    <property type="entry name" value="DTMP_kinase"/>
    <property type="match status" value="1"/>
</dbReference>
<dbReference type="PANTHER" id="PTHR10344">
    <property type="entry name" value="THYMIDYLATE KINASE"/>
    <property type="match status" value="1"/>
</dbReference>
<dbReference type="PANTHER" id="PTHR10344:SF4">
    <property type="entry name" value="UMP-CMP KINASE 2, MITOCHONDRIAL"/>
    <property type="match status" value="1"/>
</dbReference>
<dbReference type="Pfam" id="PF02223">
    <property type="entry name" value="Thymidylate_kin"/>
    <property type="match status" value="1"/>
</dbReference>
<dbReference type="SUPFAM" id="SSF52540">
    <property type="entry name" value="P-loop containing nucleoside triphosphate hydrolases"/>
    <property type="match status" value="1"/>
</dbReference>
<dbReference type="PROSITE" id="PS01331">
    <property type="entry name" value="THYMIDYLATE_KINASE"/>
    <property type="match status" value="1"/>
</dbReference>
<keyword id="KW-0067">ATP-binding</keyword>
<keyword id="KW-0418">Kinase</keyword>
<keyword id="KW-0545">Nucleotide biosynthesis</keyword>
<keyword id="KW-0547">Nucleotide-binding</keyword>
<keyword id="KW-1185">Reference proteome</keyword>
<keyword id="KW-0808">Transferase</keyword>